<gene>
    <name evidence="1" type="primary">purT</name>
    <name type="ordered locus">ASA_2181</name>
</gene>
<dbReference type="EC" id="6.3.1.21" evidence="1"/>
<dbReference type="EMBL" id="CP000644">
    <property type="protein sequence ID" value="ABO90246.1"/>
    <property type="molecule type" value="Genomic_DNA"/>
</dbReference>
<dbReference type="RefSeq" id="WP_005311240.1">
    <property type="nucleotide sequence ID" value="NC_009348.1"/>
</dbReference>
<dbReference type="SMR" id="A4SMX4"/>
<dbReference type="STRING" id="29491.GCA_000820065_00450"/>
<dbReference type="KEGG" id="asa:ASA_2181"/>
<dbReference type="PATRIC" id="fig|382245.13.peg.2144"/>
<dbReference type="eggNOG" id="COG0027">
    <property type="taxonomic scope" value="Bacteria"/>
</dbReference>
<dbReference type="HOGENOM" id="CLU_011534_1_3_6"/>
<dbReference type="UniPathway" id="UPA00074">
    <property type="reaction ID" value="UER00127"/>
</dbReference>
<dbReference type="Proteomes" id="UP000000225">
    <property type="component" value="Chromosome"/>
</dbReference>
<dbReference type="GO" id="GO:0005829">
    <property type="term" value="C:cytosol"/>
    <property type="evidence" value="ECO:0007669"/>
    <property type="project" value="TreeGrafter"/>
</dbReference>
<dbReference type="GO" id="GO:0005524">
    <property type="term" value="F:ATP binding"/>
    <property type="evidence" value="ECO:0007669"/>
    <property type="project" value="UniProtKB-UniRule"/>
</dbReference>
<dbReference type="GO" id="GO:0000287">
    <property type="term" value="F:magnesium ion binding"/>
    <property type="evidence" value="ECO:0007669"/>
    <property type="project" value="InterPro"/>
</dbReference>
<dbReference type="GO" id="GO:0043815">
    <property type="term" value="F:phosphoribosylglycinamide formyltransferase 2 activity"/>
    <property type="evidence" value="ECO:0007669"/>
    <property type="project" value="UniProtKB-UniRule"/>
</dbReference>
<dbReference type="GO" id="GO:0004644">
    <property type="term" value="F:phosphoribosylglycinamide formyltransferase activity"/>
    <property type="evidence" value="ECO:0007669"/>
    <property type="project" value="InterPro"/>
</dbReference>
<dbReference type="GO" id="GO:0006189">
    <property type="term" value="P:'de novo' IMP biosynthetic process"/>
    <property type="evidence" value="ECO:0007669"/>
    <property type="project" value="UniProtKB-UniRule"/>
</dbReference>
<dbReference type="FunFam" id="3.30.1490.20:FF:000013">
    <property type="entry name" value="Formate-dependent phosphoribosylglycinamide formyltransferase"/>
    <property type="match status" value="1"/>
</dbReference>
<dbReference type="FunFam" id="3.30.470.20:FF:000027">
    <property type="entry name" value="Formate-dependent phosphoribosylglycinamide formyltransferase"/>
    <property type="match status" value="1"/>
</dbReference>
<dbReference type="FunFam" id="3.40.50.20:FF:000007">
    <property type="entry name" value="Formate-dependent phosphoribosylglycinamide formyltransferase"/>
    <property type="match status" value="1"/>
</dbReference>
<dbReference type="Gene3D" id="3.40.50.20">
    <property type="match status" value="1"/>
</dbReference>
<dbReference type="Gene3D" id="3.30.1490.20">
    <property type="entry name" value="ATP-grasp fold, A domain"/>
    <property type="match status" value="1"/>
</dbReference>
<dbReference type="Gene3D" id="3.30.470.20">
    <property type="entry name" value="ATP-grasp fold, B domain"/>
    <property type="match status" value="1"/>
</dbReference>
<dbReference type="HAMAP" id="MF_01643">
    <property type="entry name" value="PurT"/>
    <property type="match status" value="1"/>
</dbReference>
<dbReference type="InterPro" id="IPR011761">
    <property type="entry name" value="ATP-grasp"/>
</dbReference>
<dbReference type="InterPro" id="IPR003135">
    <property type="entry name" value="ATP-grasp_carboxylate-amine"/>
</dbReference>
<dbReference type="InterPro" id="IPR013815">
    <property type="entry name" value="ATP_grasp_subdomain_1"/>
</dbReference>
<dbReference type="InterPro" id="IPR016185">
    <property type="entry name" value="PreATP-grasp_dom_sf"/>
</dbReference>
<dbReference type="InterPro" id="IPR005862">
    <property type="entry name" value="PurT"/>
</dbReference>
<dbReference type="InterPro" id="IPR054350">
    <property type="entry name" value="PurT/PurK_preATP-grasp"/>
</dbReference>
<dbReference type="InterPro" id="IPR048740">
    <property type="entry name" value="PurT_C"/>
</dbReference>
<dbReference type="InterPro" id="IPR011054">
    <property type="entry name" value="Rudment_hybrid_motif"/>
</dbReference>
<dbReference type="NCBIfam" id="NF006766">
    <property type="entry name" value="PRK09288.1"/>
    <property type="match status" value="1"/>
</dbReference>
<dbReference type="NCBIfam" id="TIGR01142">
    <property type="entry name" value="purT"/>
    <property type="match status" value="1"/>
</dbReference>
<dbReference type="PANTHER" id="PTHR43055">
    <property type="entry name" value="FORMATE-DEPENDENT PHOSPHORIBOSYLGLYCINAMIDE FORMYLTRANSFERASE"/>
    <property type="match status" value="1"/>
</dbReference>
<dbReference type="PANTHER" id="PTHR43055:SF1">
    <property type="entry name" value="FORMATE-DEPENDENT PHOSPHORIBOSYLGLYCINAMIDE FORMYLTRANSFERASE"/>
    <property type="match status" value="1"/>
</dbReference>
<dbReference type="Pfam" id="PF02222">
    <property type="entry name" value="ATP-grasp"/>
    <property type="match status" value="1"/>
</dbReference>
<dbReference type="Pfam" id="PF21244">
    <property type="entry name" value="PurT_C"/>
    <property type="match status" value="1"/>
</dbReference>
<dbReference type="Pfam" id="PF22660">
    <property type="entry name" value="RS_preATP-grasp-like"/>
    <property type="match status" value="1"/>
</dbReference>
<dbReference type="SUPFAM" id="SSF56059">
    <property type="entry name" value="Glutathione synthetase ATP-binding domain-like"/>
    <property type="match status" value="1"/>
</dbReference>
<dbReference type="SUPFAM" id="SSF52440">
    <property type="entry name" value="PreATP-grasp domain"/>
    <property type="match status" value="1"/>
</dbReference>
<dbReference type="SUPFAM" id="SSF51246">
    <property type="entry name" value="Rudiment single hybrid motif"/>
    <property type="match status" value="1"/>
</dbReference>
<dbReference type="PROSITE" id="PS50975">
    <property type="entry name" value="ATP_GRASP"/>
    <property type="match status" value="1"/>
</dbReference>
<keyword id="KW-0067">ATP-binding</keyword>
<keyword id="KW-0436">Ligase</keyword>
<keyword id="KW-0460">Magnesium</keyword>
<keyword id="KW-0479">Metal-binding</keyword>
<keyword id="KW-0547">Nucleotide-binding</keyword>
<keyword id="KW-0658">Purine biosynthesis</keyword>
<feature type="chain" id="PRO_0000319117" description="Formate-dependent phosphoribosylglycinamide formyltransferase">
    <location>
        <begin position="1"/>
        <end position="392"/>
    </location>
</feature>
<feature type="domain" description="ATP-grasp" evidence="1">
    <location>
        <begin position="117"/>
        <end position="306"/>
    </location>
</feature>
<feature type="binding site" evidence="1">
    <location>
        <begin position="20"/>
        <end position="21"/>
    </location>
    <ligand>
        <name>N(1)-(5-phospho-beta-D-ribosyl)glycinamide</name>
        <dbReference type="ChEBI" id="CHEBI:143788"/>
    </ligand>
</feature>
<feature type="binding site" evidence="1">
    <location>
        <position position="80"/>
    </location>
    <ligand>
        <name>N(1)-(5-phospho-beta-D-ribosyl)glycinamide</name>
        <dbReference type="ChEBI" id="CHEBI:143788"/>
    </ligand>
</feature>
<feature type="binding site" evidence="1">
    <location>
        <position position="112"/>
    </location>
    <ligand>
        <name>ATP</name>
        <dbReference type="ChEBI" id="CHEBI:30616"/>
    </ligand>
</feature>
<feature type="binding site" evidence="1">
    <location>
        <position position="153"/>
    </location>
    <ligand>
        <name>ATP</name>
        <dbReference type="ChEBI" id="CHEBI:30616"/>
    </ligand>
</feature>
<feature type="binding site" evidence="1">
    <location>
        <begin position="158"/>
        <end position="163"/>
    </location>
    <ligand>
        <name>ATP</name>
        <dbReference type="ChEBI" id="CHEBI:30616"/>
    </ligand>
</feature>
<feature type="binding site" evidence="1">
    <location>
        <begin position="193"/>
        <end position="196"/>
    </location>
    <ligand>
        <name>ATP</name>
        <dbReference type="ChEBI" id="CHEBI:30616"/>
    </ligand>
</feature>
<feature type="binding site" evidence="1">
    <location>
        <position position="201"/>
    </location>
    <ligand>
        <name>ATP</name>
        <dbReference type="ChEBI" id="CHEBI:30616"/>
    </ligand>
</feature>
<feature type="binding site" evidence="1">
    <location>
        <position position="265"/>
    </location>
    <ligand>
        <name>Mg(2+)</name>
        <dbReference type="ChEBI" id="CHEBI:18420"/>
    </ligand>
</feature>
<feature type="binding site" evidence="1">
    <location>
        <position position="277"/>
    </location>
    <ligand>
        <name>Mg(2+)</name>
        <dbReference type="ChEBI" id="CHEBI:18420"/>
    </ligand>
</feature>
<feature type="binding site" evidence="1">
    <location>
        <position position="284"/>
    </location>
    <ligand>
        <name>N(1)-(5-phospho-beta-D-ribosyl)glycinamide</name>
        <dbReference type="ChEBI" id="CHEBI:143788"/>
    </ligand>
</feature>
<feature type="binding site" evidence="1">
    <location>
        <position position="355"/>
    </location>
    <ligand>
        <name>N(1)-(5-phospho-beta-D-ribosyl)glycinamide</name>
        <dbReference type="ChEBI" id="CHEBI:143788"/>
    </ligand>
</feature>
<feature type="binding site" evidence="1">
    <location>
        <begin position="362"/>
        <end position="363"/>
    </location>
    <ligand>
        <name>N(1)-(5-phospho-beta-D-ribosyl)glycinamide</name>
        <dbReference type="ChEBI" id="CHEBI:143788"/>
    </ligand>
</feature>
<organism>
    <name type="scientific">Aeromonas salmonicida (strain A449)</name>
    <dbReference type="NCBI Taxonomy" id="382245"/>
    <lineage>
        <taxon>Bacteria</taxon>
        <taxon>Pseudomonadati</taxon>
        <taxon>Pseudomonadota</taxon>
        <taxon>Gammaproteobacteria</taxon>
        <taxon>Aeromonadales</taxon>
        <taxon>Aeromonadaceae</taxon>
        <taxon>Aeromonas</taxon>
    </lineage>
</organism>
<protein>
    <recommendedName>
        <fullName evidence="1">Formate-dependent phosphoribosylglycinamide formyltransferase</fullName>
        <ecNumber evidence="1">6.3.1.21</ecNumber>
    </recommendedName>
    <alternativeName>
        <fullName evidence="1">5'-phosphoribosylglycinamide transformylase 2</fullName>
    </alternativeName>
    <alternativeName>
        <fullName evidence="1">Formate-dependent GAR transformylase</fullName>
    </alternativeName>
    <alternativeName>
        <fullName evidence="1">GAR transformylase 2</fullName>
        <shortName evidence="1">GART 2</shortName>
    </alternativeName>
    <alternativeName>
        <fullName evidence="1">Non-folate glycinamide ribonucleotide transformylase</fullName>
    </alternativeName>
    <alternativeName>
        <fullName evidence="1">Phosphoribosylglycinamide formyltransferase 2</fullName>
    </alternativeName>
</protein>
<reference key="1">
    <citation type="journal article" date="2008" name="BMC Genomics">
        <title>The genome of Aeromonas salmonicida subsp. salmonicida A449: insights into the evolution of a fish pathogen.</title>
        <authorList>
            <person name="Reith M.E."/>
            <person name="Singh R.K."/>
            <person name="Curtis B."/>
            <person name="Boyd J.M."/>
            <person name="Bouevitch A."/>
            <person name="Kimball J."/>
            <person name="Munholland J."/>
            <person name="Murphy C."/>
            <person name="Sarty D."/>
            <person name="Williams J."/>
            <person name="Nash J.H."/>
            <person name="Johnson S.C."/>
            <person name="Brown L.L."/>
        </authorList>
    </citation>
    <scope>NUCLEOTIDE SEQUENCE [LARGE SCALE GENOMIC DNA]</scope>
    <source>
        <strain>A449</strain>
    </source>
</reference>
<proteinExistence type="inferred from homology"/>
<evidence type="ECO:0000255" key="1">
    <source>
        <dbReference type="HAMAP-Rule" id="MF_01643"/>
    </source>
</evidence>
<sequence length="392" mass="42171">MFGTATRPSATRALLLGSGELGKEVAIELQRFGIEVIAADRYPNAPAMQVAHKAHVLDMLDGNALRALVTLVKPDLIIPEIEAIATDTLAQLEQEGVKVVPNARATQLTMNREGIRRLAAEELGLPTSPYRFAQSKEEFIAAVEAIGLPCVVKPVMSSSGKGQSVLRDLAKLDESWTYAQEGGRAGRGKVIVEGFVPFEYEITLLTVRAVDGIHFCDPIGHRQEDGDYRESWQPQAMSTLALARSKEVAAKVVGALGGYGLFGVELFIRGDEVWFSEVSPRPHDTGMVTLISQDLSEFALHVRAILGLPIGTITQYGPSASAVVLRDGHSQDIRYQGIGAALALVSGAQLRLFGKPEIAGRRRLGVALARGQQCEEAVEKAKAVAARVEVIC</sequence>
<comment type="function">
    <text evidence="1">Involved in the de novo purine biosynthesis. Catalyzes the transfer of formate to 5-phospho-ribosyl-glycinamide (GAR), producing 5-phospho-ribosyl-N-formylglycinamide (FGAR). Formate is provided by PurU via hydrolysis of 10-formyl-tetrahydrofolate.</text>
</comment>
<comment type="catalytic activity">
    <reaction evidence="1">
        <text>N(1)-(5-phospho-beta-D-ribosyl)glycinamide + formate + ATP = N(2)-formyl-N(1)-(5-phospho-beta-D-ribosyl)glycinamide + ADP + phosphate + H(+)</text>
        <dbReference type="Rhea" id="RHEA:24829"/>
        <dbReference type="ChEBI" id="CHEBI:15378"/>
        <dbReference type="ChEBI" id="CHEBI:15740"/>
        <dbReference type="ChEBI" id="CHEBI:30616"/>
        <dbReference type="ChEBI" id="CHEBI:43474"/>
        <dbReference type="ChEBI" id="CHEBI:143788"/>
        <dbReference type="ChEBI" id="CHEBI:147286"/>
        <dbReference type="ChEBI" id="CHEBI:456216"/>
        <dbReference type="EC" id="6.3.1.21"/>
    </reaction>
    <physiologicalReaction direction="left-to-right" evidence="1">
        <dbReference type="Rhea" id="RHEA:24830"/>
    </physiologicalReaction>
</comment>
<comment type="pathway">
    <text evidence="1">Purine metabolism; IMP biosynthesis via de novo pathway; N(2)-formyl-N(1)-(5-phospho-D-ribosyl)glycinamide from N(1)-(5-phospho-D-ribosyl)glycinamide (formate route): step 1/1.</text>
</comment>
<comment type="subunit">
    <text evidence="1">Homodimer.</text>
</comment>
<comment type="similarity">
    <text evidence="1">Belongs to the PurK/PurT family.</text>
</comment>
<accession>A4SMX4</accession>
<name>PURT_AERS4</name>